<gene>
    <name evidence="1" type="primary">yfeO</name>
    <name type="ordered locus">ECUMN_2719</name>
</gene>
<sequence length="418" mass="43670">MLHPRARTMLLLSLPAVAIGIASSLILIVVMKIASVLQNLLWQRLPGTLGIAQDSPFWIIAILTLTGIAVGLVIRFSQGHAGPDPACEPLIGAPVPPSALLGLIVALILGLAGGVSLGPEHPIMTVNIALAVAIGARLLPRVNRMEWTILASAGTIGALFGTPVAAALIFSQTLNGSSEVPLWDRLFAPLMAAAAGALTTGLFFHPHFSLPIAHYGKMEMTDILSGAIVAAIAIAAGMVAVWCLPRLHAMMHQMKNPVLVLGIGGFILGILGVMGGPVSLFKGLDEMQQMVANQAFSTSDYFLLAVIKLAALVVAAASGFRGGRIFPAVFVGVALGLMLHEHVPAVPAAITVSCAILGIVLVVTRDGWLSLFMAAVVVPNTTLLPLLCIVMLPAWLLLAGKPMMMVNRPKQQPPHDNV</sequence>
<evidence type="ECO:0000255" key="1">
    <source>
        <dbReference type="HAMAP-Rule" id="MF_01115"/>
    </source>
</evidence>
<feature type="chain" id="PRO_1000137212" description="Putative ion-transport protein YfeO">
    <location>
        <begin position="1"/>
        <end position="418"/>
    </location>
</feature>
<feature type="transmembrane region" description="Helical" evidence="1">
    <location>
        <begin position="10"/>
        <end position="30"/>
    </location>
</feature>
<feature type="transmembrane region" description="Helical" evidence="1">
    <location>
        <begin position="54"/>
        <end position="74"/>
    </location>
</feature>
<feature type="transmembrane region" description="Helical" evidence="1">
    <location>
        <begin position="99"/>
        <end position="119"/>
    </location>
</feature>
<feature type="transmembrane region" description="Helical" evidence="1">
    <location>
        <begin position="120"/>
        <end position="140"/>
    </location>
</feature>
<feature type="transmembrane region" description="Helical" evidence="1">
    <location>
        <begin position="149"/>
        <end position="169"/>
    </location>
</feature>
<feature type="transmembrane region" description="Helical" evidence="1">
    <location>
        <begin position="186"/>
        <end position="206"/>
    </location>
</feature>
<feature type="transmembrane region" description="Helical" evidence="1">
    <location>
        <begin position="223"/>
        <end position="243"/>
    </location>
</feature>
<feature type="transmembrane region" description="Helical" evidence="1">
    <location>
        <begin position="258"/>
        <end position="278"/>
    </location>
</feature>
<feature type="transmembrane region" description="Helical" evidence="1">
    <location>
        <begin position="300"/>
        <end position="320"/>
    </location>
</feature>
<feature type="transmembrane region" description="Helical" evidence="1">
    <location>
        <begin position="322"/>
        <end position="342"/>
    </location>
</feature>
<feature type="transmembrane region" description="Helical" evidence="1">
    <location>
        <begin position="343"/>
        <end position="363"/>
    </location>
</feature>
<feature type="transmembrane region" description="Helical" evidence="1">
    <location>
        <begin position="371"/>
        <end position="391"/>
    </location>
</feature>
<proteinExistence type="inferred from homology"/>
<accession>B7N5Z0</accession>
<comment type="subcellular location">
    <subcellularLocation>
        <location evidence="1">Cell membrane</location>
        <topology evidence="1">Multi-pass membrane protein</topology>
    </subcellularLocation>
</comment>
<comment type="similarity">
    <text evidence="1">Belongs to the chloride channel (TC 2.A.49) family.</text>
</comment>
<dbReference type="EMBL" id="CU928163">
    <property type="protein sequence ID" value="CAR13899.1"/>
    <property type="molecule type" value="Genomic_DNA"/>
</dbReference>
<dbReference type="RefSeq" id="WP_000903118.1">
    <property type="nucleotide sequence ID" value="NC_011751.1"/>
</dbReference>
<dbReference type="RefSeq" id="YP_002413426.1">
    <property type="nucleotide sequence ID" value="NC_011751.1"/>
</dbReference>
<dbReference type="SMR" id="B7N5Z0"/>
<dbReference type="STRING" id="585056.ECUMN_2719"/>
<dbReference type="KEGG" id="eum:ECUMN_2719"/>
<dbReference type="PATRIC" id="fig|585056.7.peg.2901"/>
<dbReference type="HOGENOM" id="CLU_053130_0_0_6"/>
<dbReference type="Proteomes" id="UP000007097">
    <property type="component" value="Chromosome"/>
</dbReference>
<dbReference type="GO" id="GO:0005886">
    <property type="term" value="C:plasma membrane"/>
    <property type="evidence" value="ECO:0007669"/>
    <property type="project" value="UniProtKB-SubCell"/>
</dbReference>
<dbReference type="GO" id="GO:0015108">
    <property type="term" value="F:chloride transmembrane transporter activity"/>
    <property type="evidence" value="ECO:0007669"/>
    <property type="project" value="InterPro"/>
</dbReference>
<dbReference type="GO" id="GO:0005216">
    <property type="term" value="F:monoatomic ion channel activity"/>
    <property type="evidence" value="ECO:0007669"/>
    <property type="project" value="UniProtKB-UniRule"/>
</dbReference>
<dbReference type="CDD" id="cd00400">
    <property type="entry name" value="Voltage_gated_ClC"/>
    <property type="match status" value="1"/>
</dbReference>
<dbReference type="FunFam" id="1.10.3080.10:FF:000007">
    <property type="entry name" value="Putative ion-transport protein YfeO"/>
    <property type="match status" value="1"/>
</dbReference>
<dbReference type="Gene3D" id="1.10.3080.10">
    <property type="entry name" value="Clc chloride channel"/>
    <property type="match status" value="1"/>
</dbReference>
<dbReference type="HAMAP" id="MF_01115">
    <property type="entry name" value="CLC_YfeO"/>
    <property type="match status" value="1"/>
</dbReference>
<dbReference type="InterPro" id="IPR022969">
    <property type="entry name" value="Chloride_channel_YfeO"/>
</dbReference>
<dbReference type="InterPro" id="IPR014743">
    <property type="entry name" value="Cl-channel_core"/>
</dbReference>
<dbReference type="InterPro" id="IPR001807">
    <property type="entry name" value="ClC"/>
</dbReference>
<dbReference type="InterPro" id="IPR050368">
    <property type="entry name" value="ClC-type_chloride_channel"/>
</dbReference>
<dbReference type="NCBIfam" id="NF002971">
    <property type="entry name" value="PRK03655.1"/>
    <property type="match status" value="1"/>
</dbReference>
<dbReference type="PANTHER" id="PTHR43427">
    <property type="entry name" value="CHLORIDE CHANNEL PROTEIN CLC-E"/>
    <property type="match status" value="1"/>
</dbReference>
<dbReference type="PANTHER" id="PTHR43427:SF9">
    <property type="entry name" value="ION-TRANSPORT PROTEIN YFEO-RELATED"/>
    <property type="match status" value="1"/>
</dbReference>
<dbReference type="Pfam" id="PF00654">
    <property type="entry name" value="Voltage_CLC"/>
    <property type="match status" value="1"/>
</dbReference>
<dbReference type="PRINTS" id="PR00762">
    <property type="entry name" value="CLCHANNEL"/>
</dbReference>
<dbReference type="SUPFAM" id="SSF81340">
    <property type="entry name" value="Clc chloride channel"/>
    <property type="match status" value="1"/>
</dbReference>
<protein>
    <recommendedName>
        <fullName evidence="1">Putative ion-transport protein YfeO</fullName>
    </recommendedName>
</protein>
<reference key="1">
    <citation type="journal article" date="2009" name="PLoS Genet.">
        <title>Organised genome dynamics in the Escherichia coli species results in highly diverse adaptive paths.</title>
        <authorList>
            <person name="Touchon M."/>
            <person name="Hoede C."/>
            <person name="Tenaillon O."/>
            <person name="Barbe V."/>
            <person name="Baeriswyl S."/>
            <person name="Bidet P."/>
            <person name="Bingen E."/>
            <person name="Bonacorsi S."/>
            <person name="Bouchier C."/>
            <person name="Bouvet O."/>
            <person name="Calteau A."/>
            <person name="Chiapello H."/>
            <person name="Clermont O."/>
            <person name="Cruveiller S."/>
            <person name="Danchin A."/>
            <person name="Diard M."/>
            <person name="Dossat C."/>
            <person name="Karoui M.E."/>
            <person name="Frapy E."/>
            <person name="Garry L."/>
            <person name="Ghigo J.M."/>
            <person name="Gilles A.M."/>
            <person name="Johnson J."/>
            <person name="Le Bouguenec C."/>
            <person name="Lescat M."/>
            <person name="Mangenot S."/>
            <person name="Martinez-Jehanne V."/>
            <person name="Matic I."/>
            <person name="Nassif X."/>
            <person name="Oztas S."/>
            <person name="Petit M.A."/>
            <person name="Pichon C."/>
            <person name="Rouy Z."/>
            <person name="Ruf C.S."/>
            <person name="Schneider D."/>
            <person name="Tourret J."/>
            <person name="Vacherie B."/>
            <person name="Vallenet D."/>
            <person name="Medigue C."/>
            <person name="Rocha E.P.C."/>
            <person name="Denamur E."/>
        </authorList>
    </citation>
    <scope>NUCLEOTIDE SEQUENCE [LARGE SCALE GENOMIC DNA]</scope>
    <source>
        <strain>UMN026 / ExPEC</strain>
    </source>
</reference>
<keyword id="KW-1003">Cell membrane</keyword>
<keyword id="KW-0407">Ion channel</keyword>
<keyword id="KW-0406">Ion transport</keyword>
<keyword id="KW-0472">Membrane</keyword>
<keyword id="KW-0812">Transmembrane</keyword>
<keyword id="KW-1133">Transmembrane helix</keyword>
<keyword id="KW-0813">Transport</keyword>
<organism>
    <name type="scientific">Escherichia coli O17:K52:H18 (strain UMN026 / ExPEC)</name>
    <dbReference type="NCBI Taxonomy" id="585056"/>
    <lineage>
        <taxon>Bacteria</taxon>
        <taxon>Pseudomonadati</taxon>
        <taxon>Pseudomonadota</taxon>
        <taxon>Gammaproteobacteria</taxon>
        <taxon>Enterobacterales</taxon>
        <taxon>Enterobacteriaceae</taxon>
        <taxon>Escherichia</taxon>
    </lineage>
</organism>
<name>YFEO_ECOLU</name>